<sequence length="49" mass="5826">MRVTITLECTQCKHRNYTTTKNKKNDPGRLELKKYCPYCNAHTVHKETK</sequence>
<evidence type="ECO:0000255" key="1">
    <source>
        <dbReference type="HAMAP-Rule" id="MF_00294"/>
    </source>
</evidence>
<evidence type="ECO:0000305" key="2"/>
<comment type="similarity">
    <text evidence="1">Belongs to the bacterial ribosomal protein bL33 family.</text>
</comment>
<comment type="sequence caution" evidence="2">
    <conflict type="erroneous initiation">
        <sequence resource="EMBL-CDS" id="ABB15366"/>
    </conflict>
</comment>
<name>RL33_CARHZ</name>
<keyword id="KW-1185">Reference proteome</keyword>
<keyword id="KW-0687">Ribonucleoprotein</keyword>
<keyword id="KW-0689">Ribosomal protein</keyword>
<protein>
    <recommendedName>
        <fullName evidence="1">Large ribosomal subunit protein bL33</fullName>
    </recommendedName>
    <alternativeName>
        <fullName evidence="2">50S ribosomal protein L33</fullName>
    </alternativeName>
</protein>
<dbReference type="EMBL" id="CP000141">
    <property type="protein sequence ID" value="ABB15366.1"/>
    <property type="status" value="ALT_INIT"/>
    <property type="molecule type" value="Genomic_DNA"/>
</dbReference>
<dbReference type="RefSeq" id="WP_028052878.1">
    <property type="nucleotide sequence ID" value="NC_007503.1"/>
</dbReference>
<dbReference type="SMR" id="Q3A9P9"/>
<dbReference type="FunCoup" id="Q3A9P9">
    <property type="interactions" value="177"/>
</dbReference>
<dbReference type="STRING" id="246194.CHY_2326"/>
<dbReference type="KEGG" id="chy:CHY_2326"/>
<dbReference type="eggNOG" id="COG0267">
    <property type="taxonomic scope" value="Bacteria"/>
</dbReference>
<dbReference type="HOGENOM" id="CLU_190949_0_2_9"/>
<dbReference type="InParanoid" id="Q3A9P9"/>
<dbReference type="OrthoDB" id="9801333at2"/>
<dbReference type="Proteomes" id="UP000002706">
    <property type="component" value="Chromosome"/>
</dbReference>
<dbReference type="GO" id="GO:0005737">
    <property type="term" value="C:cytoplasm"/>
    <property type="evidence" value="ECO:0007669"/>
    <property type="project" value="UniProtKB-ARBA"/>
</dbReference>
<dbReference type="GO" id="GO:1990904">
    <property type="term" value="C:ribonucleoprotein complex"/>
    <property type="evidence" value="ECO:0007669"/>
    <property type="project" value="UniProtKB-KW"/>
</dbReference>
<dbReference type="GO" id="GO:0005840">
    <property type="term" value="C:ribosome"/>
    <property type="evidence" value="ECO:0007669"/>
    <property type="project" value="UniProtKB-KW"/>
</dbReference>
<dbReference type="GO" id="GO:0003735">
    <property type="term" value="F:structural constituent of ribosome"/>
    <property type="evidence" value="ECO:0007669"/>
    <property type="project" value="InterPro"/>
</dbReference>
<dbReference type="GO" id="GO:0006412">
    <property type="term" value="P:translation"/>
    <property type="evidence" value="ECO:0007669"/>
    <property type="project" value="UniProtKB-UniRule"/>
</dbReference>
<dbReference type="Gene3D" id="2.20.28.120">
    <property type="entry name" value="Ribosomal protein L33"/>
    <property type="match status" value="1"/>
</dbReference>
<dbReference type="HAMAP" id="MF_00294">
    <property type="entry name" value="Ribosomal_bL33"/>
    <property type="match status" value="1"/>
</dbReference>
<dbReference type="InterPro" id="IPR001705">
    <property type="entry name" value="Ribosomal_bL33"/>
</dbReference>
<dbReference type="InterPro" id="IPR018264">
    <property type="entry name" value="Ribosomal_bL33_CS"/>
</dbReference>
<dbReference type="InterPro" id="IPR038584">
    <property type="entry name" value="Ribosomal_bL33_sf"/>
</dbReference>
<dbReference type="InterPro" id="IPR011332">
    <property type="entry name" value="Ribosomal_zn-bd"/>
</dbReference>
<dbReference type="NCBIfam" id="NF001764">
    <property type="entry name" value="PRK00504.1"/>
    <property type="match status" value="1"/>
</dbReference>
<dbReference type="NCBIfam" id="NF001860">
    <property type="entry name" value="PRK00595.1"/>
    <property type="match status" value="1"/>
</dbReference>
<dbReference type="NCBIfam" id="TIGR01023">
    <property type="entry name" value="rpmG_bact"/>
    <property type="match status" value="1"/>
</dbReference>
<dbReference type="PANTHER" id="PTHR43168">
    <property type="entry name" value="50S RIBOSOMAL PROTEIN L33, CHLOROPLASTIC"/>
    <property type="match status" value="1"/>
</dbReference>
<dbReference type="PANTHER" id="PTHR43168:SF2">
    <property type="entry name" value="LARGE RIBOSOMAL SUBUNIT PROTEIN BL33C"/>
    <property type="match status" value="1"/>
</dbReference>
<dbReference type="Pfam" id="PF00471">
    <property type="entry name" value="Ribosomal_L33"/>
    <property type="match status" value="1"/>
</dbReference>
<dbReference type="SUPFAM" id="SSF57829">
    <property type="entry name" value="Zn-binding ribosomal proteins"/>
    <property type="match status" value="1"/>
</dbReference>
<dbReference type="PROSITE" id="PS00582">
    <property type="entry name" value="RIBOSOMAL_L33"/>
    <property type="match status" value="1"/>
</dbReference>
<feature type="chain" id="PRO_0000356421" description="Large ribosomal subunit protein bL33">
    <location>
        <begin position="1"/>
        <end position="49"/>
    </location>
</feature>
<organism>
    <name type="scientific">Carboxydothermus hydrogenoformans (strain ATCC BAA-161 / DSM 6008 / Z-2901)</name>
    <dbReference type="NCBI Taxonomy" id="246194"/>
    <lineage>
        <taxon>Bacteria</taxon>
        <taxon>Bacillati</taxon>
        <taxon>Bacillota</taxon>
        <taxon>Clostridia</taxon>
        <taxon>Thermoanaerobacterales</taxon>
        <taxon>Thermoanaerobacteraceae</taxon>
        <taxon>Carboxydothermus</taxon>
    </lineage>
</organism>
<gene>
    <name evidence="1" type="primary">rpmG</name>
    <name type="ordered locus">CHY_2326</name>
</gene>
<reference key="1">
    <citation type="journal article" date="2005" name="PLoS Genet.">
        <title>Life in hot carbon monoxide: the complete genome sequence of Carboxydothermus hydrogenoformans Z-2901.</title>
        <authorList>
            <person name="Wu M."/>
            <person name="Ren Q."/>
            <person name="Durkin A.S."/>
            <person name="Daugherty S.C."/>
            <person name="Brinkac L.M."/>
            <person name="Dodson R.J."/>
            <person name="Madupu R."/>
            <person name="Sullivan S.A."/>
            <person name="Kolonay J.F."/>
            <person name="Nelson W.C."/>
            <person name="Tallon L.J."/>
            <person name="Jones K.M."/>
            <person name="Ulrich L.E."/>
            <person name="Gonzalez J.M."/>
            <person name="Zhulin I.B."/>
            <person name="Robb F.T."/>
            <person name="Eisen J.A."/>
        </authorList>
    </citation>
    <scope>NUCLEOTIDE SEQUENCE [LARGE SCALE GENOMIC DNA]</scope>
    <source>
        <strain>ATCC BAA-161 / DSM 6008 / Z-2901</strain>
    </source>
</reference>
<accession>Q3A9P9</accession>
<proteinExistence type="inferred from homology"/>